<gene>
    <name type="primary">CRK41</name>
    <name type="ordered locus">At4g00970</name>
    <name type="ORF">A_TM018A10.18</name>
    <name type="ORF">T18A10.9</name>
</gene>
<reference key="1">
    <citation type="journal article" date="1999" name="Nature">
        <title>Sequence and analysis of chromosome 4 of the plant Arabidopsis thaliana.</title>
        <authorList>
            <person name="Mayer K.F.X."/>
            <person name="Schueller C."/>
            <person name="Wambutt R."/>
            <person name="Murphy G."/>
            <person name="Volckaert G."/>
            <person name="Pohl T."/>
            <person name="Duesterhoeft A."/>
            <person name="Stiekema W."/>
            <person name="Entian K.-D."/>
            <person name="Terryn N."/>
            <person name="Harris B."/>
            <person name="Ansorge W."/>
            <person name="Brandt P."/>
            <person name="Grivell L.A."/>
            <person name="Rieger M."/>
            <person name="Weichselgartner M."/>
            <person name="de Simone V."/>
            <person name="Obermaier B."/>
            <person name="Mache R."/>
            <person name="Mueller M."/>
            <person name="Kreis M."/>
            <person name="Delseny M."/>
            <person name="Puigdomenech P."/>
            <person name="Watson M."/>
            <person name="Schmidtheini T."/>
            <person name="Reichert B."/>
            <person name="Portetelle D."/>
            <person name="Perez-Alonso M."/>
            <person name="Boutry M."/>
            <person name="Bancroft I."/>
            <person name="Vos P."/>
            <person name="Hoheisel J."/>
            <person name="Zimmermann W."/>
            <person name="Wedler H."/>
            <person name="Ridley P."/>
            <person name="Langham S.-A."/>
            <person name="McCullagh B."/>
            <person name="Bilham L."/>
            <person name="Robben J."/>
            <person name="van der Schueren J."/>
            <person name="Grymonprez B."/>
            <person name="Chuang Y.-J."/>
            <person name="Vandenbussche F."/>
            <person name="Braeken M."/>
            <person name="Weltjens I."/>
            <person name="Voet M."/>
            <person name="Bastiaens I."/>
            <person name="Aert R."/>
            <person name="Defoor E."/>
            <person name="Weitzenegger T."/>
            <person name="Bothe G."/>
            <person name="Ramsperger U."/>
            <person name="Hilbert H."/>
            <person name="Braun M."/>
            <person name="Holzer E."/>
            <person name="Brandt A."/>
            <person name="Peters S."/>
            <person name="van Staveren M."/>
            <person name="Dirkse W."/>
            <person name="Mooijman P."/>
            <person name="Klein Lankhorst R."/>
            <person name="Rose M."/>
            <person name="Hauf J."/>
            <person name="Koetter P."/>
            <person name="Berneiser S."/>
            <person name="Hempel S."/>
            <person name="Feldpausch M."/>
            <person name="Lamberth S."/>
            <person name="Van den Daele H."/>
            <person name="De Keyser A."/>
            <person name="Buysshaert C."/>
            <person name="Gielen J."/>
            <person name="Villarroel R."/>
            <person name="De Clercq R."/>
            <person name="van Montagu M."/>
            <person name="Rogers J."/>
            <person name="Cronin A."/>
            <person name="Quail M.A."/>
            <person name="Bray-Allen S."/>
            <person name="Clark L."/>
            <person name="Doggett J."/>
            <person name="Hall S."/>
            <person name="Kay M."/>
            <person name="Lennard N."/>
            <person name="McLay K."/>
            <person name="Mayes R."/>
            <person name="Pettett A."/>
            <person name="Rajandream M.A."/>
            <person name="Lyne M."/>
            <person name="Benes V."/>
            <person name="Rechmann S."/>
            <person name="Borkova D."/>
            <person name="Bloecker H."/>
            <person name="Scharfe M."/>
            <person name="Grimm M."/>
            <person name="Loehnert T.-H."/>
            <person name="Dose S."/>
            <person name="de Haan M."/>
            <person name="Maarse A.C."/>
            <person name="Schaefer M."/>
            <person name="Mueller-Auer S."/>
            <person name="Gabel C."/>
            <person name="Fuchs M."/>
            <person name="Fartmann B."/>
            <person name="Granderath K."/>
            <person name="Dauner D."/>
            <person name="Herzl A."/>
            <person name="Neumann S."/>
            <person name="Argiriou A."/>
            <person name="Vitale D."/>
            <person name="Liguori R."/>
            <person name="Piravandi E."/>
            <person name="Massenet O."/>
            <person name="Quigley F."/>
            <person name="Clabauld G."/>
            <person name="Muendlein A."/>
            <person name="Felber R."/>
            <person name="Schnabl S."/>
            <person name="Hiller R."/>
            <person name="Schmidt W."/>
            <person name="Lecharny A."/>
            <person name="Aubourg S."/>
            <person name="Chefdor F."/>
            <person name="Cooke R."/>
            <person name="Berger C."/>
            <person name="Monfort A."/>
            <person name="Casacuberta E."/>
            <person name="Gibbons T."/>
            <person name="Weber N."/>
            <person name="Vandenbol M."/>
            <person name="Bargues M."/>
            <person name="Terol J."/>
            <person name="Torres A."/>
            <person name="Perez-Perez A."/>
            <person name="Purnelle B."/>
            <person name="Bent E."/>
            <person name="Johnson S."/>
            <person name="Tacon D."/>
            <person name="Jesse T."/>
            <person name="Heijnen L."/>
            <person name="Schwarz S."/>
            <person name="Scholler P."/>
            <person name="Heber S."/>
            <person name="Francs P."/>
            <person name="Bielke C."/>
            <person name="Frishman D."/>
            <person name="Haase D."/>
            <person name="Lemcke K."/>
            <person name="Mewes H.-W."/>
            <person name="Stocker S."/>
            <person name="Zaccaria P."/>
            <person name="Bevan M."/>
            <person name="Wilson R.K."/>
            <person name="de la Bastide M."/>
            <person name="Habermann K."/>
            <person name="Parnell L."/>
            <person name="Dedhia N."/>
            <person name="Gnoj L."/>
            <person name="Schutz K."/>
            <person name="Huang E."/>
            <person name="Spiegel L."/>
            <person name="Sekhon M."/>
            <person name="Murray J."/>
            <person name="Sheet P."/>
            <person name="Cordes M."/>
            <person name="Abu-Threideh J."/>
            <person name="Stoneking T."/>
            <person name="Kalicki J."/>
            <person name="Graves T."/>
            <person name="Harmon G."/>
            <person name="Edwards J."/>
            <person name="Latreille P."/>
            <person name="Courtney L."/>
            <person name="Cloud J."/>
            <person name="Abbott A."/>
            <person name="Scott K."/>
            <person name="Johnson D."/>
            <person name="Minx P."/>
            <person name="Bentley D."/>
            <person name="Fulton B."/>
            <person name="Miller N."/>
            <person name="Greco T."/>
            <person name="Kemp K."/>
            <person name="Kramer J."/>
            <person name="Fulton L."/>
            <person name="Mardis E."/>
            <person name="Dante M."/>
            <person name="Pepin K."/>
            <person name="Hillier L.W."/>
            <person name="Nelson J."/>
            <person name="Spieth J."/>
            <person name="Ryan E."/>
            <person name="Andrews S."/>
            <person name="Geisel C."/>
            <person name="Layman D."/>
            <person name="Du H."/>
            <person name="Ali J."/>
            <person name="Berghoff A."/>
            <person name="Jones K."/>
            <person name="Drone K."/>
            <person name="Cotton M."/>
            <person name="Joshu C."/>
            <person name="Antonoiu B."/>
            <person name="Zidanic M."/>
            <person name="Strong C."/>
            <person name="Sun H."/>
            <person name="Lamar B."/>
            <person name="Yordan C."/>
            <person name="Ma P."/>
            <person name="Zhong J."/>
            <person name="Preston R."/>
            <person name="Vil D."/>
            <person name="Shekher M."/>
            <person name="Matero A."/>
            <person name="Shah R."/>
            <person name="Swaby I.K."/>
            <person name="O'Shaughnessy A."/>
            <person name="Rodriguez M."/>
            <person name="Hoffman J."/>
            <person name="Till S."/>
            <person name="Granat S."/>
            <person name="Shohdy N."/>
            <person name="Hasegawa A."/>
            <person name="Hameed A."/>
            <person name="Lodhi M."/>
            <person name="Johnson A."/>
            <person name="Chen E."/>
            <person name="Marra M.A."/>
            <person name="Martienssen R."/>
            <person name="McCombie W.R."/>
        </authorList>
    </citation>
    <scope>NUCLEOTIDE SEQUENCE [LARGE SCALE GENOMIC DNA]</scope>
    <source>
        <strain>cv. Columbia</strain>
    </source>
</reference>
<reference key="2">
    <citation type="journal article" date="2017" name="Plant J.">
        <title>Araport11: a complete reannotation of the Arabidopsis thaliana reference genome.</title>
        <authorList>
            <person name="Cheng C.Y."/>
            <person name="Krishnakumar V."/>
            <person name="Chan A.P."/>
            <person name="Thibaud-Nissen F."/>
            <person name="Schobel S."/>
            <person name="Town C.D."/>
        </authorList>
    </citation>
    <scope>GENOME REANNOTATION</scope>
    <source>
        <strain>cv. Columbia</strain>
    </source>
</reference>
<reference key="3">
    <citation type="journal article" date="2001" name="Plant Physiol.">
        <title>A superfamily of proteins with novel cysteine-rich repeats.</title>
        <authorList>
            <person name="Chen Z."/>
        </authorList>
    </citation>
    <scope>GENE FAMILY ORGANIZATION</scope>
    <scope>NOMENCLATURE</scope>
</reference>
<comment type="catalytic activity">
    <reaction>
        <text>L-seryl-[protein] + ATP = O-phospho-L-seryl-[protein] + ADP + H(+)</text>
        <dbReference type="Rhea" id="RHEA:17989"/>
        <dbReference type="Rhea" id="RHEA-COMP:9863"/>
        <dbReference type="Rhea" id="RHEA-COMP:11604"/>
        <dbReference type="ChEBI" id="CHEBI:15378"/>
        <dbReference type="ChEBI" id="CHEBI:29999"/>
        <dbReference type="ChEBI" id="CHEBI:30616"/>
        <dbReference type="ChEBI" id="CHEBI:83421"/>
        <dbReference type="ChEBI" id="CHEBI:456216"/>
    </reaction>
</comment>
<comment type="catalytic activity">
    <reaction>
        <text>L-threonyl-[protein] + ATP = O-phospho-L-threonyl-[protein] + ADP + H(+)</text>
        <dbReference type="Rhea" id="RHEA:46608"/>
        <dbReference type="Rhea" id="RHEA-COMP:11060"/>
        <dbReference type="Rhea" id="RHEA-COMP:11605"/>
        <dbReference type="ChEBI" id="CHEBI:15378"/>
        <dbReference type="ChEBI" id="CHEBI:30013"/>
        <dbReference type="ChEBI" id="CHEBI:30616"/>
        <dbReference type="ChEBI" id="CHEBI:61977"/>
        <dbReference type="ChEBI" id="CHEBI:456216"/>
    </reaction>
</comment>
<comment type="subcellular location">
    <subcellularLocation>
        <location evidence="6">Membrane</location>
        <topology evidence="6">Single-pass membrane protein</topology>
    </subcellularLocation>
</comment>
<comment type="similarity">
    <text evidence="3">Belongs to the protein kinase superfamily. Ser/Thr protein kinase family. CRK subfamily.</text>
</comment>
<comment type="sequence caution" evidence="6">
    <conflict type="erroneous gene model prediction">
        <sequence resource="EMBL-CDS" id="AAB62860"/>
    </conflict>
</comment>
<comment type="sequence caution" evidence="6">
    <conflict type="erroneous gene model prediction">
        <sequence resource="EMBL-CDS" id="CAB80906"/>
    </conflict>
</comment>
<keyword id="KW-0067">ATP-binding</keyword>
<keyword id="KW-0325">Glycoprotein</keyword>
<keyword id="KW-0418">Kinase</keyword>
<keyword id="KW-0472">Membrane</keyword>
<keyword id="KW-0547">Nucleotide-binding</keyword>
<keyword id="KW-0597">Phosphoprotein</keyword>
<keyword id="KW-0675">Receptor</keyword>
<keyword id="KW-1185">Reference proteome</keyword>
<keyword id="KW-0677">Repeat</keyword>
<keyword id="KW-0723">Serine/threonine-protein kinase</keyword>
<keyword id="KW-0732">Signal</keyword>
<keyword id="KW-0808">Transferase</keyword>
<keyword id="KW-0812">Transmembrane</keyword>
<keyword id="KW-1133">Transmembrane helix</keyword>
<accession>O23081</accession>
<feature type="signal peptide" evidence="2">
    <location>
        <begin position="1"/>
        <end position="27"/>
    </location>
</feature>
<feature type="chain" id="PRO_0000295088" description="Cysteine-rich receptor-like protein kinase 41">
    <location>
        <begin position="28"/>
        <end position="665"/>
    </location>
</feature>
<feature type="topological domain" description="Extracellular" evidence="2">
    <location>
        <begin position="28"/>
        <end position="280"/>
    </location>
</feature>
<feature type="transmembrane region" description="Helical" evidence="2">
    <location>
        <begin position="281"/>
        <end position="301"/>
    </location>
</feature>
<feature type="topological domain" description="Cytoplasmic" evidence="2">
    <location>
        <begin position="302"/>
        <end position="665"/>
    </location>
</feature>
<feature type="domain" description="Gnk2-homologous 1" evidence="4">
    <location>
        <begin position="42"/>
        <end position="148"/>
    </location>
</feature>
<feature type="domain" description="Gnk2-homologous 2" evidence="4">
    <location>
        <begin position="154"/>
        <end position="260"/>
    </location>
</feature>
<feature type="domain" description="Protein kinase" evidence="3">
    <location>
        <begin position="344"/>
        <end position="624"/>
    </location>
</feature>
<feature type="active site" description="Proton acceptor" evidence="3 5">
    <location>
        <position position="469"/>
    </location>
</feature>
<feature type="binding site" evidence="3">
    <location>
        <begin position="350"/>
        <end position="358"/>
    </location>
    <ligand>
        <name>ATP</name>
        <dbReference type="ChEBI" id="CHEBI:30616"/>
    </ligand>
</feature>
<feature type="binding site" evidence="3">
    <location>
        <position position="372"/>
    </location>
    <ligand>
        <name>ATP</name>
        <dbReference type="ChEBI" id="CHEBI:30616"/>
    </ligand>
</feature>
<feature type="modified residue" description="Phosphotyrosine" evidence="1">
    <location>
        <position position="417"/>
    </location>
</feature>
<feature type="modified residue" description="Phosphoserine" evidence="1">
    <location>
        <position position="473"/>
    </location>
</feature>
<feature type="modified residue" description="Phosphothreonine" evidence="1">
    <location>
        <position position="511"/>
    </location>
</feature>
<feature type="modified residue" description="Phosphotyrosine" evidence="1">
    <location>
        <position position="519"/>
    </location>
</feature>
<feature type="glycosylation site" description="N-linked (GlcNAc...) asparagine" evidence="2">
    <location>
        <position position="120"/>
    </location>
</feature>
<feature type="glycosylation site" description="N-linked (GlcNAc...) asparagine" evidence="2">
    <location>
        <position position="165"/>
    </location>
</feature>
<feature type="glycosylation site" description="N-linked (GlcNAc...) asparagine" evidence="2">
    <location>
        <position position="236"/>
    </location>
</feature>
<protein>
    <recommendedName>
        <fullName>Cysteine-rich receptor-like protein kinase 41</fullName>
        <shortName>Cysteine-rich RLK41</shortName>
        <ecNumber>2.7.11.-</ecNumber>
    </recommendedName>
</protein>
<evidence type="ECO:0000250" key="1">
    <source>
        <dbReference type="UniProtKB" id="O48814"/>
    </source>
</evidence>
<evidence type="ECO:0000255" key="2"/>
<evidence type="ECO:0000255" key="3">
    <source>
        <dbReference type="PROSITE-ProRule" id="PRU00159"/>
    </source>
</evidence>
<evidence type="ECO:0000255" key="4">
    <source>
        <dbReference type="PROSITE-ProRule" id="PRU00806"/>
    </source>
</evidence>
<evidence type="ECO:0000255" key="5">
    <source>
        <dbReference type="PROSITE-ProRule" id="PRU10027"/>
    </source>
</evidence>
<evidence type="ECO:0000305" key="6"/>
<organism>
    <name type="scientific">Arabidopsis thaliana</name>
    <name type="common">Mouse-ear cress</name>
    <dbReference type="NCBI Taxonomy" id="3702"/>
    <lineage>
        <taxon>Eukaryota</taxon>
        <taxon>Viridiplantae</taxon>
        <taxon>Streptophyta</taxon>
        <taxon>Embryophyta</taxon>
        <taxon>Tracheophyta</taxon>
        <taxon>Spermatophyta</taxon>
        <taxon>Magnoliopsida</taxon>
        <taxon>eudicotyledons</taxon>
        <taxon>Gunneridae</taxon>
        <taxon>Pentapetalae</taxon>
        <taxon>rosids</taxon>
        <taxon>malvids</taxon>
        <taxon>Brassicales</taxon>
        <taxon>Brassicaceae</taxon>
        <taxon>Camelineae</taxon>
        <taxon>Arabidopsis</taxon>
    </lineage>
</organism>
<name>CRK41_ARATH</name>
<sequence>MTSSCSLSRPQHLFFFFFLFVPFLSLGQQISVDINSAIWEFPSNPLCLSQQSNFAKSSQFSKNLDSLVSSIPSLKSNTYNFYSLSVGSISDQERVEAIGICNRVVNRVDCLNCIAQAAVNLTTMYCPQHRGAYVRATKCMFRYSDKPIFGKLETSPVLEAPNPSNATGDRNEFIRLQSELLNRLRSMAASGGSKRKYAQGTDPGSPPYTTFFGAVQCTPDLSEKDCNDCLSYGFSNATKGRVGIRWFCPSCNFQIESDLRFFLLDSEYEPDPKPGNDKVKIIIATVCSVIGFAIIAVFLYFFMTRNRRTAKQRHEGKDLEELMIKDAQLLQLDFDTIRLATNDFSRDNQLGEGGFGAVYKGVLDYGEEIAVKRLSMKSGQGDNEFINEVSLVAKLQHRNLVRLLGFCLQGEERILIYEFFKNTSLDHYIFDSNRRMILDWETRYRIISGVARGLLYLHEDSRFKIVHRDMKASNVLLDDAMNPKIADFGMAKLFDTDQTSQTRFTSKVAGTYGYMAPEYAMSGEFSVKTDVFSFGVLVLEIIKGKKNNWSPEEDSSLFLLSYVWKSWREGEVLNIVDPSLVETIGVSDEIMKCIHIGLLCVQENAESRPTMASVVVMLNANSFTLPRPSQPAFYSGDGESLSRDKNQINHIASLNDVTITEFDAR</sequence>
<dbReference type="EC" id="2.7.11.-"/>
<dbReference type="EMBL" id="AF013294">
    <property type="protein sequence ID" value="AAB62860.1"/>
    <property type="status" value="ALT_SEQ"/>
    <property type="molecule type" value="Genomic_DNA"/>
</dbReference>
<dbReference type="EMBL" id="AL161491">
    <property type="protein sequence ID" value="CAB80906.1"/>
    <property type="status" value="ALT_SEQ"/>
    <property type="molecule type" value="Genomic_DNA"/>
</dbReference>
<dbReference type="EMBL" id="CP002687">
    <property type="protein sequence ID" value="AEE81962.1"/>
    <property type="molecule type" value="Genomic_DNA"/>
</dbReference>
<dbReference type="PIR" id="T01550">
    <property type="entry name" value="T01550"/>
</dbReference>
<dbReference type="RefSeq" id="NP_567204.3">
    <property type="nucleotide sequence ID" value="NM_116325.4"/>
</dbReference>
<dbReference type="SMR" id="O23081"/>
<dbReference type="FunCoup" id="O23081">
    <property type="interactions" value="134"/>
</dbReference>
<dbReference type="STRING" id="3702.O23081"/>
<dbReference type="GlyCosmos" id="O23081">
    <property type="glycosylation" value="3 sites, No reported glycans"/>
</dbReference>
<dbReference type="GlyGen" id="O23081">
    <property type="glycosylation" value="3 sites"/>
</dbReference>
<dbReference type="iPTMnet" id="O23081"/>
<dbReference type="PaxDb" id="3702-AT4G00970.1"/>
<dbReference type="ProteomicsDB" id="220346"/>
<dbReference type="EnsemblPlants" id="AT4G00970.1">
    <property type="protein sequence ID" value="AT4G00970.1"/>
    <property type="gene ID" value="AT4G00970"/>
</dbReference>
<dbReference type="GeneID" id="827936"/>
<dbReference type="Gramene" id="AT4G00970.1">
    <property type="protein sequence ID" value="AT4G00970.1"/>
    <property type="gene ID" value="AT4G00970"/>
</dbReference>
<dbReference type="KEGG" id="ath:AT4G00970"/>
<dbReference type="Araport" id="AT4G00970"/>
<dbReference type="TAIR" id="AT4G00970">
    <property type="gene designation" value="CRK41"/>
</dbReference>
<dbReference type="eggNOG" id="ENOG502QWDY">
    <property type="taxonomic scope" value="Eukaryota"/>
</dbReference>
<dbReference type="HOGENOM" id="CLU_000288_35_2_1"/>
<dbReference type="InParanoid" id="O23081"/>
<dbReference type="OMA" id="DYPTIYG"/>
<dbReference type="PhylomeDB" id="O23081"/>
<dbReference type="PRO" id="PR:O23081"/>
<dbReference type="Proteomes" id="UP000006548">
    <property type="component" value="Chromosome 4"/>
</dbReference>
<dbReference type="ExpressionAtlas" id="O23081">
    <property type="expression patterns" value="baseline and differential"/>
</dbReference>
<dbReference type="GO" id="GO:0016020">
    <property type="term" value="C:membrane"/>
    <property type="evidence" value="ECO:0007669"/>
    <property type="project" value="UniProtKB-SubCell"/>
</dbReference>
<dbReference type="GO" id="GO:0005524">
    <property type="term" value="F:ATP binding"/>
    <property type="evidence" value="ECO:0007669"/>
    <property type="project" value="UniProtKB-KW"/>
</dbReference>
<dbReference type="GO" id="GO:0106310">
    <property type="term" value="F:protein serine kinase activity"/>
    <property type="evidence" value="ECO:0007669"/>
    <property type="project" value="RHEA"/>
</dbReference>
<dbReference type="GO" id="GO:0004674">
    <property type="term" value="F:protein serine/threonine kinase activity"/>
    <property type="evidence" value="ECO:0007669"/>
    <property type="project" value="UniProtKB-KW"/>
</dbReference>
<dbReference type="CDD" id="cd23509">
    <property type="entry name" value="Gnk2-like"/>
    <property type="match status" value="2"/>
</dbReference>
<dbReference type="CDD" id="cd14066">
    <property type="entry name" value="STKc_IRAK"/>
    <property type="match status" value="1"/>
</dbReference>
<dbReference type="FunFam" id="3.30.200.20:FF:000142">
    <property type="entry name" value="Cysteine-rich receptor-like protein kinase 10"/>
    <property type="match status" value="1"/>
</dbReference>
<dbReference type="FunFam" id="1.10.510.10:FF:000343">
    <property type="entry name" value="Cysteine-rich receptor-like protein kinase 28"/>
    <property type="match status" value="1"/>
</dbReference>
<dbReference type="Gene3D" id="3.30.430.20">
    <property type="entry name" value="Gnk2 domain, C-X8-C-X2-C motif"/>
    <property type="match status" value="2"/>
</dbReference>
<dbReference type="Gene3D" id="3.30.200.20">
    <property type="entry name" value="Phosphorylase Kinase, domain 1"/>
    <property type="match status" value="1"/>
</dbReference>
<dbReference type="Gene3D" id="1.10.510.10">
    <property type="entry name" value="Transferase(Phosphotransferase) domain 1"/>
    <property type="match status" value="1"/>
</dbReference>
<dbReference type="InterPro" id="IPR002902">
    <property type="entry name" value="GNK2"/>
</dbReference>
<dbReference type="InterPro" id="IPR038408">
    <property type="entry name" value="GNK2_sf"/>
</dbReference>
<dbReference type="InterPro" id="IPR011009">
    <property type="entry name" value="Kinase-like_dom_sf"/>
</dbReference>
<dbReference type="InterPro" id="IPR000719">
    <property type="entry name" value="Prot_kinase_dom"/>
</dbReference>
<dbReference type="InterPro" id="IPR017441">
    <property type="entry name" value="Protein_kinase_ATP_BS"/>
</dbReference>
<dbReference type="InterPro" id="IPR001245">
    <property type="entry name" value="Ser-Thr/Tyr_kinase_cat_dom"/>
</dbReference>
<dbReference type="InterPro" id="IPR008271">
    <property type="entry name" value="Ser/Thr_kinase_AS"/>
</dbReference>
<dbReference type="PANTHER" id="PTHR27002:SF1104">
    <property type="entry name" value="CYSTEINE-RICH RECEPTOR-LIKE PROTEIN KINASE 27-RELATED"/>
    <property type="match status" value="1"/>
</dbReference>
<dbReference type="PANTHER" id="PTHR27002">
    <property type="entry name" value="RECEPTOR-LIKE SERINE/THREONINE-PROTEIN KINASE SD1-8"/>
    <property type="match status" value="1"/>
</dbReference>
<dbReference type="Pfam" id="PF07714">
    <property type="entry name" value="PK_Tyr_Ser-Thr"/>
    <property type="match status" value="1"/>
</dbReference>
<dbReference type="Pfam" id="PF01657">
    <property type="entry name" value="Stress-antifung"/>
    <property type="match status" value="2"/>
</dbReference>
<dbReference type="SMART" id="SM00220">
    <property type="entry name" value="S_TKc"/>
    <property type="match status" value="1"/>
</dbReference>
<dbReference type="SUPFAM" id="SSF56112">
    <property type="entry name" value="Protein kinase-like (PK-like)"/>
    <property type="match status" value="1"/>
</dbReference>
<dbReference type="PROSITE" id="PS51473">
    <property type="entry name" value="GNK2"/>
    <property type="match status" value="2"/>
</dbReference>
<dbReference type="PROSITE" id="PS00107">
    <property type="entry name" value="PROTEIN_KINASE_ATP"/>
    <property type="match status" value="1"/>
</dbReference>
<dbReference type="PROSITE" id="PS50011">
    <property type="entry name" value="PROTEIN_KINASE_DOM"/>
    <property type="match status" value="1"/>
</dbReference>
<dbReference type="PROSITE" id="PS00108">
    <property type="entry name" value="PROTEIN_KINASE_ST"/>
    <property type="match status" value="1"/>
</dbReference>
<proteinExistence type="inferred from homology"/>